<dbReference type="EMBL" id="AM920689">
    <property type="protein sequence ID" value="CAP52581.1"/>
    <property type="molecule type" value="Genomic_DNA"/>
</dbReference>
<dbReference type="SMR" id="B0RY61"/>
<dbReference type="KEGG" id="xca:xcc-b100_3216"/>
<dbReference type="HOGENOM" id="CLU_067812_0_1_6"/>
<dbReference type="Proteomes" id="UP000001188">
    <property type="component" value="Chromosome"/>
</dbReference>
<dbReference type="GO" id="GO:0000902">
    <property type="term" value="P:cell morphogenesis"/>
    <property type="evidence" value="ECO:0007669"/>
    <property type="project" value="InterPro"/>
</dbReference>
<dbReference type="GO" id="GO:0000917">
    <property type="term" value="P:division septum assembly"/>
    <property type="evidence" value="ECO:0007669"/>
    <property type="project" value="UniProtKB-KW"/>
</dbReference>
<dbReference type="GO" id="GO:0051302">
    <property type="term" value="P:regulation of cell division"/>
    <property type="evidence" value="ECO:0007669"/>
    <property type="project" value="InterPro"/>
</dbReference>
<dbReference type="GO" id="GO:1901891">
    <property type="term" value="P:regulation of cell septum assembly"/>
    <property type="evidence" value="ECO:0007669"/>
    <property type="project" value="InterPro"/>
</dbReference>
<dbReference type="Gene3D" id="2.160.20.70">
    <property type="match status" value="1"/>
</dbReference>
<dbReference type="Gene3D" id="3.30.70.260">
    <property type="match status" value="1"/>
</dbReference>
<dbReference type="HAMAP" id="MF_00267">
    <property type="entry name" value="MinC"/>
    <property type="match status" value="1"/>
</dbReference>
<dbReference type="InterPro" id="IPR016098">
    <property type="entry name" value="CAP/MinC_C"/>
</dbReference>
<dbReference type="InterPro" id="IPR013033">
    <property type="entry name" value="MinC"/>
</dbReference>
<dbReference type="InterPro" id="IPR036145">
    <property type="entry name" value="MinC_C_sf"/>
</dbReference>
<dbReference type="InterPro" id="IPR007874">
    <property type="entry name" value="MinC_N"/>
</dbReference>
<dbReference type="InterPro" id="IPR005526">
    <property type="entry name" value="Septum_form_inhib_MinC_C"/>
</dbReference>
<dbReference type="NCBIfam" id="TIGR01222">
    <property type="entry name" value="minC"/>
    <property type="match status" value="1"/>
</dbReference>
<dbReference type="PANTHER" id="PTHR34108">
    <property type="entry name" value="SEPTUM SITE-DETERMINING PROTEIN MINC"/>
    <property type="match status" value="1"/>
</dbReference>
<dbReference type="PANTHER" id="PTHR34108:SF1">
    <property type="entry name" value="SEPTUM SITE-DETERMINING PROTEIN MINC"/>
    <property type="match status" value="1"/>
</dbReference>
<dbReference type="Pfam" id="PF03775">
    <property type="entry name" value="MinC_C"/>
    <property type="match status" value="1"/>
</dbReference>
<dbReference type="Pfam" id="PF05209">
    <property type="entry name" value="MinC_N"/>
    <property type="match status" value="1"/>
</dbReference>
<dbReference type="SUPFAM" id="SSF63848">
    <property type="entry name" value="Cell-division inhibitor MinC, C-terminal domain"/>
    <property type="match status" value="1"/>
</dbReference>
<organism>
    <name type="scientific">Xanthomonas campestris pv. campestris (strain B100)</name>
    <dbReference type="NCBI Taxonomy" id="509169"/>
    <lineage>
        <taxon>Bacteria</taxon>
        <taxon>Pseudomonadati</taxon>
        <taxon>Pseudomonadota</taxon>
        <taxon>Gammaproteobacteria</taxon>
        <taxon>Lysobacterales</taxon>
        <taxon>Lysobacteraceae</taxon>
        <taxon>Xanthomonas</taxon>
    </lineage>
</organism>
<gene>
    <name evidence="1" type="primary">minC</name>
    <name type="ordered locus">xcc-b100_3216</name>
</gene>
<keyword id="KW-0131">Cell cycle</keyword>
<keyword id="KW-0132">Cell division</keyword>
<keyword id="KW-0717">Septation</keyword>
<protein>
    <recommendedName>
        <fullName evidence="1">Probable septum site-determining protein MinC</fullName>
    </recommendedName>
</protein>
<reference key="1">
    <citation type="journal article" date="2008" name="J. Biotechnol.">
        <title>The genome of Xanthomonas campestris pv. campestris B100 and its use for the reconstruction of metabolic pathways involved in xanthan biosynthesis.</title>
        <authorList>
            <person name="Vorhoelter F.-J."/>
            <person name="Schneiker S."/>
            <person name="Goesmann A."/>
            <person name="Krause L."/>
            <person name="Bekel T."/>
            <person name="Kaiser O."/>
            <person name="Linke B."/>
            <person name="Patschkowski T."/>
            <person name="Rueckert C."/>
            <person name="Schmid J."/>
            <person name="Sidhu V.K."/>
            <person name="Sieber V."/>
            <person name="Tauch A."/>
            <person name="Watt S.A."/>
            <person name="Weisshaar B."/>
            <person name="Becker A."/>
            <person name="Niehaus K."/>
            <person name="Puehler A."/>
        </authorList>
    </citation>
    <scope>NUCLEOTIDE SEQUENCE [LARGE SCALE GENOMIC DNA]</scope>
    <source>
        <strain>B100</strain>
    </source>
</reference>
<comment type="function">
    <text evidence="1">Cell division inhibitor that blocks the formation of polar Z ring septums. Rapidly oscillates between the poles of the cell to destabilize FtsZ filaments that have formed before they mature into polar Z rings. Prevents FtsZ polymerization.</text>
</comment>
<comment type="subunit">
    <text evidence="1">Interacts with MinD and FtsZ.</text>
</comment>
<comment type="similarity">
    <text evidence="1">Belongs to the MinC family.</text>
</comment>
<proteinExistence type="inferred from homology"/>
<sequence>MSSVNVDFEQAGELKIGQVGIANLRIRTLDVPRLVREMQDRVTRAPKLFGRAAVILDFGGLAQTPDLATAKALLDGLRSAGVLPVALAYGTSEIDLLSQQLGIPLLAKFRAQYETAAVSPPPPPPPPPARAEPAAPVARPAPGRMQRNAVRSGQQLYAENCDLTVLSTVGAGAEVIADGSIHIYGTLRGRALAGAQGNPDARIFCRDFHAELVAIAGHYKVLDDVPMDLRGKAVQVWLEQDQIKIAALD</sequence>
<evidence type="ECO:0000255" key="1">
    <source>
        <dbReference type="HAMAP-Rule" id="MF_00267"/>
    </source>
</evidence>
<evidence type="ECO:0000256" key="2">
    <source>
        <dbReference type="SAM" id="MobiDB-lite"/>
    </source>
</evidence>
<accession>B0RY61</accession>
<feature type="chain" id="PRO_1000114300" description="Probable septum site-determining protein MinC">
    <location>
        <begin position="1"/>
        <end position="249"/>
    </location>
</feature>
<feature type="region of interest" description="Disordered" evidence="2">
    <location>
        <begin position="116"/>
        <end position="149"/>
    </location>
</feature>
<feature type="compositionally biased region" description="Pro residues" evidence="2">
    <location>
        <begin position="119"/>
        <end position="130"/>
    </location>
</feature>
<feature type="compositionally biased region" description="Low complexity" evidence="2">
    <location>
        <begin position="131"/>
        <end position="142"/>
    </location>
</feature>
<name>MINC_XANCB</name>